<protein>
    <recommendedName>
        <fullName>26S proteasome regulatory subunit 7 homolog A</fullName>
    </recommendedName>
    <alternativeName>
        <fullName>26S proteasome AAA-ATPase subunit RPT1a</fullName>
    </alternativeName>
    <alternativeName>
        <fullName>26S proteasome subunit 7 homolog A</fullName>
    </alternativeName>
    <alternativeName>
        <fullName>Regulatory particle triple-A ATPase subunit 1a</fullName>
    </alternativeName>
</protein>
<reference key="1">
    <citation type="journal article" date="1999" name="Plant J.">
        <title>Structural and functional analysis of the six regulatory particle triple-A ATPase subunits from the Arabidopsis 26S proteasome.</title>
        <authorList>
            <person name="Fu H."/>
            <person name="Doelling J.H."/>
            <person name="Rubin D.M."/>
            <person name="Vierstra R.D."/>
        </authorList>
    </citation>
    <scope>NUCLEOTIDE SEQUENCE [MRNA]</scope>
    <scope>GENE FAMILY</scope>
    <scope>NOMENCLATURE</scope>
    <source>
        <strain>cv. Columbia</strain>
    </source>
</reference>
<reference key="2">
    <citation type="journal article" date="2000" name="Nature">
        <title>Sequence and analysis of chromosome 1 of the plant Arabidopsis thaliana.</title>
        <authorList>
            <person name="Theologis A."/>
            <person name="Ecker J.R."/>
            <person name="Palm C.J."/>
            <person name="Federspiel N.A."/>
            <person name="Kaul S."/>
            <person name="White O."/>
            <person name="Alonso J."/>
            <person name="Altafi H."/>
            <person name="Araujo R."/>
            <person name="Bowman C.L."/>
            <person name="Brooks S.Y."/>
            <person name="Buehler E."/>
            <person name="Chan A."/>
            <person name="Chao Q."/>
            <person name="Chen H."/>
            <person name="Cheuk R.F."/>
            <person name="Chin C.W."/>
            <person name="Chung M.K."/>
            <person name="Conn L."/>
            <person name="Conway A.B."/>
            <person name="Conway A.R."/>
            <person name="Creasy T.H."/>
            <person name="Dewar K."/>
            <person name="Dunn P."/>
            <person name="Etgu P."/>
            <person name="Feldblyum T.V."/>
            <person name="Feng J.-D."/>
            <person name="Fong B."/>
            <person name="Fujii C.Y."/>
            <person name="Gill J.E."/>
            <person name="Goldsmith A.D."/>
            <person name="Haas B."/>
            <person name="Hansen N.F."/>
            <person name="Hughes B."/>
            <person name="Huizar L."/>
            <person name="Hunter J.L."/>
            <person name="Jenkins J."/>
            <person name="Johnson-Hopson C."/>
            <person name="Khan S."/>
            <person name="Khaykin E."/>
            <person name="Kim C.J."/>
            <person name="Koo H.L."/>
            <person name="Kremenetskaia I."/>
            <person name="Kurtz D.B."/>
            <person name="Kwan A."/>
            <person name="Lam B."/>
            <person name="Langin-Hooper S."/>
            <person name="Lee A."/>
            <person name="Lee J.M."/>
            <person name="Lenz C.A."/>
            <person name="Li J.H."/>
            <person name="Li Y.-P."/>
            <person name="Lin X."/>
            <person name="Liu S.X."/>
            <person name="Liu Z.A."/>
            <person name="Luros J.S."/>
            <person name="Maiti R."/>
            <person name="Marziali A."/>
            <person name="Militscher J."/>
            <person name="Miranda M."/>
            <person name="Nguyen M."/>
            <person name="Nierman W.C."/>
            <person name="Osborne B.I."/>
            <person name="Pai G."/>
            <person name="Peterson J."/>
            <person name="Pham P.K."/>
            <person name="Rizzo M."/>
            <person name="Rooney T."/>
            <person name="Rowley D."/>
            <person name="Sakano H."/>
            <person name="Salzberg S.L."/>
            <person name="Schwartz J.R."/>
            <person name="Shinn P."/>
            <person name="Southwick A.M."/>
            <person name="Sun H."/>
            <person name="Tallon L.J."/>
            <person name="Tambunga G."/>
            <person name="Toriumi M.J."/>
            <person name="Town C.D."/>
            <person name="Utterback T."/>
            <person name="Van Aken S."/>
            <person name="Vaysberg M."/>
            <person name="Vysotskaia V.S."/>
            <person name="Walker M."/>
            <person name="Wu D."/>
            <person name="Yu G."/>
            <person name="Fraser C.M."/>
            <person name="Venter J.C."/>
            <person name="Davis R.W."/>
        </authorList>
    </citation>
    <scope>NUCLEOTIDE SEQUENCE [LARGE SCALE GENOMIC DNA]</scope>
    <source>
        <strain>cv. Columbia</strain>
    </source>
</reference>
<reference key="3">
    <citation type="journal article" date="2017" name="Plant J.">
        <title>Araport11: a complete reannotation of the Arabidopsis thaliana reference genome.</title>
        <authorList>
            <person name="Cheng C.Y."/>
            <person name="Krishnakumar V."/>
            <person name="Chan A.P."/>
            <person name="Thibaud-Nissen F."/>
            <person name="Schobel S."/>
            <person name="Town C.D."/>
        </authorList>
    </citation>
    <scope>GENOME REANNOTATION</scope>
    <source>
        <strain>cv. Columbia</strain>
    </source>
</reference>
<reference key="4">
    <citation type="journal article" date="2003" name="Science">
        <title>Empirical analysis of transcriptional activity in the Arabidopsis genome.</title>
        <authorList>
            <person name="Yamada K."/>
            <person name="Lim J."/>
            <person name="Dale J.M."/>
            <person name="Chen H."/>
            <person name="Shinn P."/>
            <person name="Palm C.J."/>
            <person name="Southwick A.M."/>
            <person name="Wu H.C."/>
            <person name="Kim C.J."/>
            <person name="Nguyen M."/>
            <person name="Pham P.K."/>
            <person name="Cheuk R.F."/>
            <person name="Karlin-Newmann G."/>
            <person name="Liu S.X."/>
            <person name="Lam B."/>
            <person name="Sakano H."/>
            <person name="Wu T."/>
            <person name="Yu G."/>
            <person name="Miranda M."/>
            <person name="Quach H.L."/>
            <person name="Tripp M."/>
            <person name="Chang C.H."/>
            <person name="Lee J.M."/>
            <person name="Toriumi M.J."/>
            <person name="Chan M.M."/>
            <person name="Tang C.C."/>
            <person name="Onodera C.S."/>
            <person name="Deng J.M."/>
            <person name="Akiyama K."/>
            <person name="Ansari Y."/>
            <person name="Arakawa T."/>
            <person name="Banh J."/>
            <person name="Banno F."/>
            <person name="Bowser L."/>
            <person name="Brooks S.Y."/>
            <person name="Carninci P."/>
            <person name="Chao Q."/>
            <person name="Choy N."/>
            <person name="Enju A."/>
            <person name="Goldsmith A.D."/>
            <person name="Gurjal M."/>
            <person name="Hansen N.F."/>
            <person name="Hayashizaki Y."/>
            <person name="Johnson-Hopson C."/>
            <person name="Hsuan V.W."/>
            <person name="Iida K."/>
            <person name="Karnes M."/>
            <person name="Khan S."/>
            <person name="Koesema E."/>
            <person name="Ishida J."/>
            <person name="Jiang P.X."/>
            <person name="Jones T."/>
            <person name="Kawai J."/>
            <person name="Kamiya A."/>
            <person name="Meyers C."/>
            <person name="Nakajima M."/>
            <person name="Narusaka M."/>
            <person name="Seki M."/>
            <person name="Sakurai T."/>
            <person name="Satou M."/>
            <person name="Tamse R."/>
            <person name="Vaysberg M."/>
            <person name="Wallender E.K."/>
            <person name="Wong C."/>
            <person name="Yamamura Y."/>
            <person name="Yuan S."/>
            <person name="Shinozaki K."/>
            <person name="Davis R.W."/>
            <person name="Theologis A."/>
            <person name="Ecker J.R."/>
        </authorList>
    </citation>
    <scope>NUCLEOTIDE SEQUENCE [LARGE SCALE MRNA]</scope>
    <source>
        <strain>cv. Columbia</strain>
    </source>
</reference>
<reference key="5">
    <citation type="journal article" date="2004" name="J. Biol. Chem.">
        <title>Purification of the Arabidopsis 26 S proteasome: biochemical and molecular analyses revealed the presence of multiple isoforms.</title>
        <authorList>
            <person name="Yang P."/>
            <person name="Fu H."/>
            <person name="Walker J."/>
            <person name="Papa C.M."/>
            <person name="Smalle J."/>
            <person name="Ju Y.-M."/>
            <person name="Vierstra R.D."/>
        </authorList>
    </citation>
    <scope>SUBUNIT</scope>
    <scope>IDENTIFICATION BY MASS SPECTROMETRY</scope>
</reference>
<reference key="6">
    <citation type="journal article" date="2010" name="J. Biol. Chem.">
        <title>Affinity purification of the Arabidopsis 26 S proteasome reveals a diverse array of plant proteolytic complexes.</title>
        <authorList>
            <person name="Book A.J."/>
            <person name="Gladman N.P."/>
            <person name="Lee S.S."/>
            <person name="Scalf M."/>
            <person name="Smith L.M."/>
            <person name="Vierstra R.D."/>
        </authorList>
    </citation>
    <scope>IDENTIFICATION BY MASS SPECTROMETRY</scope>
    <scope>CHARACTERIZATION OF THE 26S PROTEASOME COMPLEX</scope>
    <scope>SUBUNIT</scope>
    <scope>UBIQUITINATION AT LYS-400</scope>
</reference>
<dbReference type="EMBL" id="AF123390">
    <property type="protein sequence ID" value="AAF22521.1"/>
    <property type="molecule type" value="mRNA"/>
</dbReference>
<dbReference type="EMBL" id="AC009324">
    <property type="protein sequence ID" value="AAF02852.1"/>
    <property type="molecule type" value="Genomic_DNA"/>
</dbReference>
<dbReference type="EMBL" id="AC024260">
    <property type="protein sequence ID" value="AAG51970.1"/>
    <property type="molecule type" value="Genomic_DNA"/>
</dbReference>
<dbReference type="EMBL" id="CP002684">
    <property type="protein sequence ID" value="AEE32992.1"/>
    <property type="molecule type" value="Genomic_DNA"/>
</dbReference>
<dbReference type="EMBL" id="AY062860">
    <property type="protein sequence ID" value="AAL32938.1"/>
    <property type="molecule type" value="mRNA"/>
</dbReference>
<dbReference type="EMBL" id="BT000069">
    <property type="protein sequence ID" value="AAN15388.1"/>
    <property type="molecule type" value="mRNA"/>
</dbReference>
<dbReference type="PIR" id="G96577">
    <property type="entry name" value="G96577"/>
</dbReference>
<dbReference type="RefSeq" id="NP_175778.1">
    <property type="nucleotide sequence ID" value="NM_104252.3"/>
</dbReference>
<dbReference type="SMR" id="Q9SSB5"/>
<dbReference type="BioGRID" id="27037">
    <property type="interactions" value="114"/>
</dbReference>
<dbReference type="FunCoup" id="Q9SSB5">
    <property type="interactions" value="4454"/>
</dbReference>
<dbReference type="IntAct" id="Q9SSB5">
    <property type="interactions" value="2"/>
</dbReference>
<dbReference type="STRING" id="3702.Q9SSB5"/>
<dbReference type="iPTMnet" id="Q9SSB5"/>
<dbReference type="PaxDb" id="3702-AT1G53750.1"/>
<dbReference type="ProteomicsDB" id="226337"/>
<dbReference type="EnsemblPlants" id="AT1G53750.1">
    <property type="protein sequence ID" value="AT1G53750.1"/>
    <property type="gene ID" value="AT1G53750"/>
</dbReference>
<dbReference type="GeneID" id="841812"/>
<dbReference type="Gramene" id="AT1G53750.1">
    <property type="protein sequence ID" value="AT1G53750.1"/>
    <property type="gene ID" value="AT1G53750"/>
</dbReference>
<dbReference type="KEGG" id="ath:AT1G53750"/>
<dbReference type="Araport" id="AT1G53750"/>
<dbReference type="TAIR" id="AT1G53750">
    <property type="gene designation" value="RPT1A"/>
</dbReference>
<dbReference type="eggNOG" id="KOG0729">
    <property type="taxonomic scope" value="Eukaryota"/>
</dbReference>
<dbReference type="HOGENOM" id="CLU_000688_6_1_1"/>
<dbReference type="InParanoid" id="Q9SSB5"/>
<dbReference type="OMA" id="MANEHED"/>
<dbReference type="OrthoDB" id="1029281at2759"/>
<dbReference type="PhylomeDB" id="Q9SSB5"/>
<dbReference type="CD-CODE" id="4299E36E">
    <property type="entry name" value="Nucleolus"/>
</dbReference>
<dbReference type="PRO" id="PR:Q9SSB5"/>
<dbReference type="Proteomes" id="UP000006548">
    <property type="component" value="Chromosome 1"/>
</dbReference>
<dbReference type="ExpressionAtlas" id="Q9SSB5">
    <property type="expression patterns" value="baseline and differential"/>
</dbReference>
<dbReference type="GO" id="GO:0005737">
    <property type="term" value="C:cytoplasm"/>
    <property type="evidence" value="ECO:0007669"/>
    <property type="project" value="UniProtKB-SubCell"/>
</dbReference>
<dbReference type="GO" id="GO:0005634">
    <property type="term" value="C:nucleus"/>
    <property type="evidence" value="ECO:0007005"/>
    <property type="project" value="TAIR"/>
</dbReference>
<dbReference type="GO" id="GO:0000502">
    <property type="term" value="C:proteasome complex"/>
    <property type="evidence" value="ECO:0000314"/>
    <property type="project" value="TAIR"/>
</dbReference>
<dbReference type="GO" id="GO:0005524">
    <property type="term" value="F:ATP binding"/>
    <property type="evidence" value="ECO:0007669"/>
    <property type="project" value="UniProtKB-KW"/>
</dbReference>
<dbReference type="GO" id="GO:0016887">
    <property type="term" value="F:ATP hydrolysis activity"/>
    <property type="evidence" value="ECO:0007669"/>
    <property type="project" value="InterPro"/>
</dbReference>
<dbReference type="CDD" id="cd19502">
    <property type="entry name" value="RecA-like_PAN_like"/>
    <property type="match status" value="1"/>
</dbReference>
<dbReference type="FunFam" id="1.10.8.60:FF:000005">
    <property type="entry name" value="26S protease regulatory subunit 7"/>
    <property type="match status" value="1"/>
</dbReference>
<dbReference type="FunFam" id="2.40.50.140:FF:000037">
    <property type="entry name" value="26S protease regulatory subunit 7"/>
    <property type="match status" value="1"/>
</dbReference>
<dbReference type="FunFam" id="3.40.50.300:FF:000027">
    <property type="entry name" value="26S protease regulatory subunit 7"/>
    <property type="match status" value="1"/>
</dbReference>
<dbReference type="Gene3D" id="1.10.8.60">
    <property type="match status" value="1"/>
</dbReference>
<dbReference type="Gene3D" id="2.40.50.140">
    <property type="entry name" value="Nucleic acid-binding proteins"/>
    <property type="match status" value="1"/>
</dbReference>
<dbReference type="Gene3D" id="3.40.50.300">
    <property type="entry name" value="P-loop containing nucleotide triphosphate hydrolases"/>
    <property type="match status" value="1"/>
</dbReference>
<dbReference type="InterPro" id="IPR050221">
    <property type="entry name" value="26S_Proteasome_ATPase"/>
</dbReference>
<dbReference type="InterPro" id="IPR003593">
    <property type="entry name" value="AAA+_ATPase"/>
</dbReference>
<dbReference type="InterPro" id="IPR041569">
    <property type="entry name" value="AAA_lid_3"/>
</dbReference>
<dbReference type="InterPro" id="IPR003959">
    <property type="entry name" value="ATPase_AAA_core"/>
</dbReference>
<dbReference type="InterPro" id="IPR003960">
    <property type="entry name" value="ATPase_AAA_CS"/>
</dbReference>
<dbReference type="InterPro" id="IPR012340">
    <property type="entry name" value="NA-bd_OB-fold"/>
</dbReference>
<dbReference type="InterPro" id="IPR027417">
    <property type="entry name" value="P-loop_NTPase"/>
</dbReference>
<dbReference type="InterPro" id="IPR048723">
    <property type="entry name" value="PRS7-like_OB"/>
</dbReference>
<dbReference type="PANTHER" id="PTHR23073">
    <property type="entry name" value="26S PROTEASOME REGULATORY SUBUNIT"/>
    <property type="match status" value="1"/>
</dbReference>
<dbReference type="Pfam" id="PF00004">
    <property type="entry name" value="AAA"/>
    <property type="match status" value="1"/>
</dbReference>
<dbReference type="Pfam" id="PF17862">
    <property type="entry name" value="AAA_lid_3"/>
    <property type="match status" value="1"/>
</dbReference>
<dbReference type="Pfam" id="PF21236">
    <property type="entry name" value="PRS7_OB"/>
    <property type="match status" value="1"/>
</dbReference>
<dbReference type="SMART" id="SM00382">
    <property type="entry name" value="AAA"/>
    <property type="match status" value="1"/>
</dbReference>
<dbReference type="SUPFAM" id="SSF52540">
    <property type="entry name" value="P-loop containing nucleoside triphosphate hydrolases"/>
    <property type="match status" value="1"/>
</dbReference>
<dbReference type="PROSITE" id="PS00674">
    <property type="entry name" value="AAA"/>
    <property type="match status" value="1"/>
</dbReference>
<organism>
    <name type="scientific">Arabidopsis thaliana</name>
    <name type="common">Mouse-ear cress</name>
    <dbReference type="NCBI Taxonomy" id="3702"/>
    <lineage>
        <taxon>Eukaryota</taxon>
        <taxon>Viridiplantae</taxon>
        <taxon>Streptophyta</taxon>
        <taxon>Embryophyta</taxon>
        <taxon>Tracheophyta</taxon>
        <taxon>Spermatophyta</taxon>
        <taxon>Magnoliopsida</taxon>
        <taxon>eudicotyledons</taxon>
        <taxon>Gunneridae</taxon>
        <taxon>Pentapetalae</taxon>
        <taxon>rosids</taxon>
        <taxon>malvids</taxon>
        <taxon>Brassicales</taxon>
        <taxon>Brassicaceae</taxon>
        <taxon>Camelineae</taxon>
        <taxon>Arabidopsis</taxon>
    </lineage>
</organism>
<comment type="function">
    <text>The 26S proteasome is involved in the ATP-dependent degradation of ubiquitinated proteins. The regulatory (or ATPase) complex confers ATP dependency and substrate specificity to the 26S complex.</text>
</comment>
<comment type="subunit">
    <text evidence="4 5">Component of the 19S regulatory particle (RP/PA700) base subcomplex of the 26S proteasome. The 26S proteasome is composed of a core protease (CP), known as the 20S proteasome, capped at one or both ends by the 19S regulatory particle (RP/PA700). The RP/PA700 complex is composed of at least 17 different subunits in two subcomplexes, the base and the lid, which form the portions proximal and distal to the 20S proteolytic core, respectively.</text>
</comment>
<comment type="subcellular location">
    <subcellularLocation>
        <location evidence="1">Cytoplasm</location>
    </subcellularLocation>
    <subcellularLocation>
        <location evidence="1">Nucleus</location>
    </subcellularLocation>
</comment>
<comment type="similarity">
    <text evidence="6">Belongs to the AAA ATPase family.</text>
</comment>
<name>PRS7A_ARATH</name>
<evidence type="ECO:0000250" key="1"/>
<evidence type="ECO:0000250" key="2">
    <source>
        <dbReference type="UniProtKB" id="Q9SEI2"/>
    </source>
</evidence>
<evidence type="ECO:0000255" key="3"/>
<evidence type="ECO:0000269" key="4">
    <source>
    </source>
</evidence>
<evidence type="ECO:0000269" key="5">
    <source>
    </source>
</evidence>
<evidence type="ECO:0000305" key="6"/>
<sequence>MVRDIEDEIRDEKNPRPLDEDDIALLKTYGLGPYSAPIKKVEKEIKDLAKKINDLCGIKESDTGLAPPSQWDLVSDKQMMQEEQPLQVARCTKIISPNTEDAKYVINVKQIAKFVVGLGDKVSPTDIEEGMRVGVDRNKYQIQIPLPPKIDPSVTMMTVEEKPDVTYNDVGGCKEQIEKMREVVELPMLHPEKFVKLGIDPPKGVLCYGPPGTGKTLLARAVANRTDACFIRVIGSELVQKYVGEGARMVRELFQMARSKKACIVFFDEVDAIGGARFDDGVGGDNEVQRTMLEIVNQLDGFDARGNIKVLMATNRPDTLDPALLRPGRLDRKVEFGLPDLESRTQIFKIHTRTMNCERDIRFELLARLCPNSTGADIRSVCTEAGMYAIRARRKTVTEKDFLDAVNKVIKGYQKFSATPKYMVYN</sequence>
<accession>Q9SSB5</accession>
<accession>Q9SEI6</accession>
<feature type="chain" id="PRO_0000084714" description="26S proteasome regulatory subunit 7 homolog A">
    <location>
        <begin position="1"/>
        <end position="426"/>
    </location>
</feature>
<feature type="binding site" evidence="3">
    <location>
        <begin position="209"/>
        <end position="216"/>
    </location>
    <ligand>
        <name>ATP</name>
        <dbReference type="ChEBI" id="CHEBI:30616"/>
    </ligand>
</feature>
<feature type="cross-link" description="Glycyl lysine isopeptide (Lys-Gly) (interchain with G-Cter in ubiquitin)" evidence="5">
    <location>
        <position position="400"/>
    </location>
</feature>
<feature type="cross-link" description="Glycyl lysine isopeptide (Lys-Gly) (interchain with G-Cter in ubiquitin)" evidence="2">
    <location>
        <position position="415"/>
    </location>
</feature>
<feature type="sequence conflict" description="In Ref. 1; AAF22521." evidence="6" ref="1">
    <original>P</original>
    <variation>S</variation>
    <location>
        <position position="327"/>
    </location>
</feature>
<proteinExistence type="evidence at protein level"/>
<gene>
    <name type="primary">RPT1A</name>
    <name type="ordered locus">At1g53750</name>
    <name type="ORF">F22G10.2</name>
    <name type="ORF">T18A20.1</name>
</gene>
<keyword id="KW-0067">ATP-binding</keyword>
<keyword id="KW-0963">Cytoplasm</keyword>
<keyword id="KW-1017">Isopeptide bond</keyword>
<keyword id="KW-0547">Nucleotide-binding</keyword>
<keyword id="KW-0539">Nucleus</keyword>
<keyword id="KW-0647">Proteasome</keyword>
<keyword id="KW-1185">Reference proteome</keyword>
<keyword id="KW-0832">Ubl conjugation</keyword>